<evidence type="ECO:0000250" key="1">
    <source>
        <dbReference type="UniProtKB" id="A0A0A1HA03"/>
    </source>
</evidence>
<evidence type="ECO:0000250" key="2">
    <source>
        <dbReference type="UniProtKB" id="P51094"/>
    </source>
</evidence>
<evidence type="ECO:0000269" key="3">
    <source>
    </source>
</evidence>
<evidence type="ECO:0000269" key="4">
    <source>
    </source>
</evidence>
<evidence type="ECO:0000303" key="5">
    <source>
    </source>
</evidence>
<evidence type="ECO:0000305" key="6"/>
<evidence type="ECO:0000312" key="7">
    <source>
        <dbReference type="Araport" id="AT1G07250"/>
    </source>
</evidence>
<evidence type="ECO:0000312" key="8">
    <source>
        <dbReference type="EMBL" id="AAG18592.1"/>
    </source>
</evidence>
<organism>
    <name type="scientific">Arabidopsis thaliana</name>
    <name type="common">Mouse-ear cress</name>
    <dbReference type="NCBI Taxonomy" id="3702"/>
    <lineage>
        <taxon>Eukaryota</taxon>
        <taxon>Viridiplantae</taxon>
        <taxon>Streptophyta</taxon>
        <taxon>Embryophyta</taxon>
        <taxon>Tracheophyta</taxon>
        <taxon>Spermatophyta</taxon>
        <taxon>Magnoliopsida</taxon>
        <taxon>eudicotyledons</taxon>
        <taxon>Gunneridae</taxon>
        <taxon>Pentapetalae</taxon>
        <taxon>rosids</taxon>
        <taxon>malvids</taxon>
        <taxon>Brassicales</taxon>
        <taxon>Brassicaceae</taxon>
        <taxon>Camelineae</taxon>
        <taxon>Arabidopsis</taxon>
    </lineage>
</organism>
<dbReference type="EC" id="2.4.1.91" evidence="4"/>
<dbReference type="EC" id="2.4.1.237" evidence="4"/>
<dbReference type="EMBL" id="AC067971">
    <property type="protein sequence ID" value="AAG18592.1"/>
    <property type="molecule type" value="Genomic_DNA"/>
</dbReference>
<dbReference type="EMBL" id="CP002684">
    <property type="protein sequence ID" value="AEE28097.1"/>
    <property type="molecule type" value="Genomic_DNA"/>
</dbReference>
<dbReference type="EMBL" id="AY040019">
    <property type="protein sequence ID" value="AAK64176.2"/>
    <property type="molecule type" value="mRNA"/>
</dbReference>
<dbReference type="EMBL" id="BT001938">
    <property type="protein sequence ID" value="AAN71937.1"/>
    <property type="molecule type" value="mRNA"/>
</dbReference>
<dbReference type="PIR" id="G86207">
    <property type="entry name" value="G86207"/>
</dbReference>
<dbReference type="RefSeq" id="NP_563784.2">
    <property type="nucleotide sequence ID" value="NM_100599.4"/>
</dbReference>
<dbReference type="SMR" id="Q9LML6"/>
<dbReference type="FunCoup" id="Q9LML6">
    <property type="interactions" value="601"/>
</dbReference>
<dbReference type="STRING" id="3702.Q9LML6"/>
<dbReference type="CAZy" id="GT1">
    <property type="family name" value="Glycosyltransferase Family 1"/>
</dbReference>
<dbReference type="iPTMnet" id="Q9LML6"/>
<dbReference type="MetOSite" id="Q9LML6"/>
<dbReference type="PaxDb" id="3702-AT1G07250.1"/>
<dbReference type="ProteomicsDB" id="228586"/>
<dbReference type="DNASU" id="837236"/>
<dbReference type="EnsemblPlants" id="AT1G07250.1">
    <property type="protein sequence ID" value="AT1G07250.1"/>
    <property type="gene ID" value="AT1G07250"/>
</dbReference>
<dbReference type="GeneID" id="837236"/>
<dbReference type="Gramene" id="AT1G07250.1">
    <property type="protein sequence ID" value="AT1G07250.1"/>
    <property type="gene ID" value="AT1G07250"/>
</dbReference>
<dbReference type="KEGG" id="ath:AT1G07250"/>
<dbReference type="Araport" id="AT1G07250"/>
<dbReference type="TAIR" id="AT1G07250">
    <property type="gene designation" value="UGT71C4"/>
</dbReference>
<dbReference type="eggNOG" id="KOG1192">
    <property type="taxonomic scope" value="Eukaryota"/>
</dbReference>
<dbReference type="HOGENOM" id="CLU_001724_3_2_1"/>
<dbReference type="InParanoid" id="Q9LML6"/>
<dbReference type="OMA" id="CNARYLG"/>
<dbReference type="OrthoDB" id="5835829at2759"/>
<dbReference type="PhylomeDB" id="Q9LML6"/>
<dbReference type="PRO" id="PR:Q9LML6"/>
<dbReference type="Proteomes" id="UP000006548">
    <property type="component" value="Chromosome 1"/>
</dbReference>
<dbReference type="ExpressionAtlas" id="Q9LML6">
    <property type="expression patterns" value="baseline and differential"/>
</dbReference>
<dbReference type="GO" id="GO:0047893">
    <property type="term" value="F:flavonol 3-O-glucosyltransferase activity"/>
    <property type="evidence" value="ECO:0007669"/>
    <property type="project" value="UniProtKB-EC"/>
</dbReference>
<dbReference type="GO" id="GO:0033836">
    <property type="term" value="F:flavonol 7-O-beta-glucosyltransferase activity"/>
    <property type="evidence" value="ECO:0007669"/>
    <property type="project" value="UniProtKB-EC"/>
</dbReference>
<dbReference type="GO" id="GO:0080043">
    <property type="term" value="F:quercetin 3-O-glucosyltransferase activity"/>
    <property type="evidence" value="ECO:0000314"/>
    <property type="project" value="TAIR"/>
</dbReference>
<dbReference type="GO" id="GO:0080044">
    <property type="term" value="F:quercetin 7-O-glucosyltransferase activity"/>
    <property type="evidence" value="ECO:0000314"/>
    <property type="project" value="TAIR"/>
</dbReference>
<dbReference type="GO" id="GO:0035251">
    <property type="term" value="F:UDP-glucosyltransferase activity"/>
    <property type="evidence" value="ECO:0000314"/>
    <property type="project" value="TAIR"/>
</dbReference>
<dbReference type="CDD" id="cd03784">
    <property type="entry name" value="GT1_Gtf-like"/>
    <property type="match status" value="1"/>
</dbReference>
<dbReference type="FunFam" id="3.40.50.2000:FF:000056">
    <property type="entry name" value="Glycosyltransferase"/>
    <property type="match status" value="1"/>
</dbReference>
<dbReference type="FunFam" id="3.40.50.2000:FF:000080">
    <property type="entry name" value="Glycosyltransferase"/>
    <property type="match status" value="1"/>
</dbReference>
<dbReference type="Gene3D" id="3.40.50.2000">
    <property type="entry name" value="Glycogen Phosphorylase B"/>
    <property type="match status" value="2"/>
</dbReference>
<dbReference type="InterPro" id="IPR050481">
    <property type="entry name" value="UDP-glycosyltransf_plant"/>
</dbReference>
<dbReference type="InterPro" id="IPR002213">
    <property type="entry name" value="UDP_glucos_trans"/>
</dbReference>
<dbReference type="InterPro" id="IPR035595">
    <property type="entry name" value="UDP_glycos_trans_CS"/>
</dbReference>
<dbReference type="PANTHER" id="PTHR48048">
    <property type="entry name" value="GLYCOSYLTRANSFERASE"/>
    <property type="match status" value="1"/>
</dbReference>
<dbReference type="PANTHER" id="PTHR48048:SF45">
    <property type="entry name" value="GLYCOSYLTRANSFERASE"/>
    <property type="match status" value="1"/>
</dbReference>
<dbReference type="Pfam" id="PF00201">
    <property type="entry name" value="UDPGT"/>
    <property type="match status" value="1"/>
</dbReference>
<dbReference type="SUPFAM" id="SSF53756">
    <property type="entry name" value="UDP-Glycosyltransferase/glycogen phosphorylase"/>
    <property type="match status" value="1"/>
</dbReference>
<dbReference type="PROSITE" id="PS00375">
    <property type="entry name" value="UDPGT"/>
    <property type="match status" value="1"/>
</dbReference>
<gene>
    <name evidence="5" type="primary">UGT71C4</name>
    <name evidence="7" type="ordered locus">At1g07250</name>
    <name evidence="8" type="ORF">F10K1.4</name>
</gene>
<reference key="1">
    <citation type="journal article" date="2000" name="Nature">
        <title>Sequence and analysis of chromosome 1 of the plant Arabidopsis thaliana.</title>
        <authorList>
            <person name="Theologis A."/>
            <person name="Ecker J.R."/>
            <person name="Palm C.J."/>
            <person name="Federspiel N.A."/>
            <person name="Kaul S."/>
            <person name="White O."/>
            <person name="Alonso J."/>
            <person name="Altafi H."/>
            <person name="Araujo R."/>
            <person name="Bowman C.L."/>
            <person name="Brooks S.Y."/>
            <person name="Buehler E."/>
            <person name="Chan A."/>
            <person name="Chao Q."/>
            <person name="Chen H."/>
            <person name="Cheuk R.F."/>
            <person name="Chin C.W."/>
            <person name="Chung M.K."/>
            <person name="Conn L."/>
            <person name="Conway A.B."/>
            <person name="Conway A.R."/>
            <person name="Creasy T.H."/>
            <person name="Dewar K."/>
            <person name="Dunn P."/>
            <person name="Etgu P."/>
            <person name="Feldblyum T.V."/>
            <person name="Feng J.-D."/>
            <person name="Fong B."/>
            <person name="Fujii C.Y."/>
            <person name="Gill J.E."/>
            <person name="Goldsmith A.D."/>
            <person name="Haas B."/>
            <person name="Hansen N.F."/>
            <person name="Hughes B."/>
            <person name="Huizar L."/>
            <person name="Hunter J.L."/>
            <person name="Jenkins J."/>
            <person name="Johnson-Hopson C."/>
            <person name="Khan S."/>
            <person name="Khaykin E."/>
            <person name="Kim C.J."/>
            <person name="Koo H.L."/>
            <person name="Kremenetskaia I."/>
            <person name="Kurtz D.B."/>
            <person name="Kwan A."/>
            <person name="Lam B."/>
            <person name="Langin-Hooper S."/>
            <person name="Lee A."/>
            <person name="Lee J.M."/>
            <person name="Lenz C.A."/>
            <person name="Li J.H."/>
            <person name="Li Y.-P."/>
            <person name="Lin X."/>
            <person name="Liu S.X."/>
            <person name="Liu Z.A."/>
            <person name="Luros J.S."/>
            <person name="Maiti R."/>
            <person name="Marziali A."/>
            <person name="Militscher J."/>
            <person name="Miranda M."/>
            <person name="Nguyen M."/>
            <person name="Nierman W.C."/>
            <person name="Osborne B.I."/>
            <person name="Pai G."/>
            <person name="Peterson J."/>
            <person name="Pham P.K."/>
            <person name="Rizzo M."/>
            <person name="Rooney T."/>
            <person name="Rowley D."/>
            <person name="Sakano H."/>
            <person name="Salzberg S.L."/>
            <person name="Schwartz J.R."/>
            <person name="Shinn P."/>
            <person name="Southwick A.M."/>
            <person name="Sun H."/>
            <person name="Tallon L.J."/>
            <person name="Tambunga G."/>
            <person name="Toriumi M.J."/>
            <person name="Town C.D."/>
            <person name="Utterback T."/>
            <person name="Van Aken S."/>
            <person name="Vaysberg M."/>
            <person name="Vysotskaia V.S."/>
            <person name="Walker M."/>
            <person name="Wu D."/>
            <person name="Yu G."/>
            <person name="Fraser C.M."/>
            <person name="Venter J.C."/>
            <person name="Davis R.W."/>
        </authorList>
    </citation>
    <scope>NUCLEOTIDE SEQUENCE [LARGE SCALE GENOMIC DNA]</scope>
    <source>
        <strain>cv. Columbia</strain>
    </source>
</reference>
<reference key="2">
    <citation type="journal article" date="2017" name="Plant J.">
        <title>Araport11: a complete reannotation of the Arabidopsis thaliana reference genome.</title>
        <authorList>
            <person name="Cheng C.Y."/>
            <person name="Krishnakumar V."/>
            <person name="Chan A.P."/>
            <person name="Thibaud-Nissen F."/>
            <person name="Schobel S."/>
            <person name="Town C.D."/>
        </authorList>
    </citation>
    <scope>GENOME REANNOTATION</scope>
    <source>
        <strain>cv. Columbia</strain>
    </source>
</reference>
<reference key="3">
    <citation type="journal article" date="2003" name="Science">
        <title>Empirical analysis of transcriptional activity in the Arabidopsis genome.</title>
        <authorList>
            <person name="Yamada K."/>
            <person name="Lim J."/>
            <person name="Dale J.M."/>
            <person name="Chen H."/>
            <person name="Shinn P."/>
            <person name="Palm C.J."/>
            <person name="Southwick A.M."/>
            <person name="Wu H.C."/>
            <person name="Kim C.J."/>
            <person name="Nguyen M."/>
            <person name="Pham P.K."/>
            <person name="Cheuk R.F."/>
            <person name="Karlin-Newmann G."/>
            <person name="Liu S.X."/>
            <person name="Lam B."/>
            <person name="Sakano H."/>
            <person name="Wu T."/>
            <person name="Yu G."/>
            <person name="Miranda M."/>
            <person name="Quach H.L."/>
            <person name="Tripp M."/>
            <person name="Chang C.H."/>
            <person name="Lee J.M."/>
            <person name="Toriumi M.J."/>
            <person name="Chan M.M."/>
            <person name="Tang C.C."/>
            <person name="Onodera C.S."/>
            <person name="Deng J.M."/>
            <person name="Akiyama K."/>
            <person name="Ansari Y."/>
            <person name="Arakawa T."/>
            <person name="Banh J."/>
            <person name="Banno F."/>
            <person name="Bowser L."/>
            <person name="Brooks S.Y."/>
            <person name="Carninci P."/>
            <person name="Chao Q."/>
            <person name="Choy N."/>
            <person name="Enju A."/>
            <person name="Goldsmith A.D."/>
            <person name="Gurjal M."/>
            <person name="Hansen N.F."/>
            <person name="Hayashizaki Y."/>
            <person name="Johnson-Hopson C."/>
            <person name="Hsuan V.W."/>
            <person name="Iida K."/>
            <person name="Karnes M."/>
            <person name="Khan S."/>
            <person name="Koesema E."/>
            <person name="Ishida J."/>
            <person name="Jiang P.X."/>
            <person name="Jones T."/>
            <person name="Kawai J."/>
            <person name="Kamiya A."/>
            <person name="Meyers C."/>
            <person name="Nakajima M."/>
            <person name="Narusaka M."/>
            <person name="Seki M."/>
            <person name="Sakurai T."/>
            <person name="Satou M."/>
            <person name="Tamse R."/>
            <person name="Vaysberg M."/>
            <person name="Wallender E.K."/>
            <person name="Wong C."/>
            <person name="Yamamura Y."/>
            <person name="Yuan S."/>
            <person name="Shinozaki K."/>
            <person name="Davis R.W."/>
            <person name="Theologis A."/>
            <person name="Ecker J.R."/>
        </authorList>
    </citation>
    <scope>NUCLEOTIDE SEQUENCE [LARGE SCALE MRNA]</scope>
    <source>
        <strain>cv. Columbia</strain>
    </source>
</reference>
<reference key="4">
    <citation type="journal article" date="2001" name="J. Biol. Chem.">
        <title>Phylogenetic analysis of the UDP-glycosyltransferase multigene family of Arabidopsis thaliana.</title>
        <authorList>
            <person name="Li Y."/>
            <person name="Baldauf S."/>
            <person name="Lim E.K."/>
            <person name="Bowles D.J."/>
        </authorList>
    </citation>
    <scope>GENE FAMILY</scope>
</reference>
<reference key="5">
    <citation type="journal article" date="2002" name="J. Biol. Chem.">
        <title>The activity of Arabidopsis glycosyltransferases toward salicylic acid, 4-hydroxybenzoic acid, and other benzoates.</title>
        <authorList>
            <person name="Lim E.K."/>
            <person name="Doucet C.J."/>
            <person name="Li Y."/>
            <person name="Elias L."/>
            <person name="Worrall D."/>
            <person name="Spencer S.P."/>
            <person name="Ross J."/>
            <person name="Bowles D.J."/>
        </authorList>
    </citation>
    <scope>FUNCTION</scope>
</reference>
<reference key="6">
    <citation type="journal article" date="2004" name="Biotechnol. Bioeng.">
        <title>Arabidopsis glycosyltransferases as biocatalysts in fermentation for regioselective synthesis of diverse quercetin glucosides.</title>
        <authorList>
            <person name="Lim E.K."/>
            <person name="Ashford D.A."/>
            <person name="Hou B."/>
            <person name="Jackson R.G."/>
            <person name="Bowles D.J."/>
        </authorList>
    </citation>
    <scope>FUNCTION</scope>
    <scope>CATALYTIC ACTIVITY</scope>
</reference>
<keyword id="KW-0328">Glycosyltransferase</keyword>
<keyword id="KW-1185">Reference proteome</keyword>
<keyword id="KW-0808">Transferase</keyword>
<protein>
    <recommendedName>
        <fullName evidence="6">Flavonol 3-O-glucosyltransferase UGT71C4</fullName>
        <ecNumber evidence="4">2.4.1.91</ecNumber>
    </recommendedName>
    <alternativeName>
        <fullName evidence="6">Flavonol 7-O-beta-glucosyltransferase UGT71C4</fullName>
        <ecNumber evidence="4">2.4.1.237</ecNumber>
    </alternativeName>
    <alternativeName>
        <fullName evidence="5">UDP-glycosyltransferase 71C4</fullName>
    </alternativeName>
</protein>
<comment type="function">
    <text evidence="3 4">Possesses quercetin 3-O-glucosyltransferase and 7-O-glucosyltransferase activities in vitro. Also active in vitro on benzoates and benzoate derivatives.</text>
</comment>
<comment type="catalytic activity">
    <reaction evidence="4">
        <text>a flavonol + UDP-alpha-D-glucose = a flavonol 3-O-beta-D-glucoside + UDP + H(+)</text>
        <dbReference type="Rhea" id="RHEA:22300"/>
        <dbReference type="ChEBI" id="CHEBI:15378"/>
        <dbReference type="ChEBI" id="CHEBI:16816"/>
        <dbReference type="ChEBI" id="CHEBI:28802"/>
        <dbReference type="ChEBI" id="CHEBI:58223"/>
        <dbReference type="ChEBI" id="CHEBI:58885"/>
        <dbReference type="EC" id="2.4.1.91"/>
    </reaction>
</comment>
<comment type="catalytic activity">
    <reaction evidence="4">
        <text>a 7-O-hydroxy-flavonol + UDP-alpha-D-glucose = a flavonol 7-O-beta-D-glucoside + UDP + H(+)</text>
        <dbReference type="Rhea" id="RHEA:23164"/>
        <dbReference type="ChEBI" id="CHEBI:15378"/>
        <dbReference type="ChEBI" id="CHEBI:52144"/>
        <dbReference type="ChEBI" id="CHEBI:52267"/>
        <dbReference type="ChEBI" id="CHEBI:58223"/>
        <dbReference type="ChEBI" id="CHEBI:58885"/>
        <dbReference type="EC" id="2.4.1.237"/>
    </reaction>
</comment>
<comment type="similarity">
    <text evidence="6">Belongs to the UDP-glycosyltransferase family.</text>
</comment>
<feature type="chain" id="PRO_0000409056" description="Flavonol 3-O-glucosyltransferase UGT71C4">
    <location>
        <begin position="1"/>
        <end position="479"/>
    </location>
</feature>
<feature type="active site" description="Proton acceptor" evidence="1">
    <location>
        <position position="17"/>
    </location>
</feature>
<feature type="active site" description="Charge relay" evidence="1">
    <location>
        <position position="127"/>
    </location>
</feature>
<feature type="binding site" evidence="2">
    <location>
        <position position="17"/>
    </location>
    <ligand>
        <name>an anthocyanidin</name>
        <dbReference type="ChEBI" id="CHEBI:143576"/>
    </ligand>
</feature>
<feature type="binding site" evidence="1">
    <location>
        <position position="150"/>
    </location>
    <ligand>
        <name>UDP-alpha-D-glucose</name>
        <dbReference type="ChEBI" id="CHEBI:58885"/>
    </ligand>
</feature>
<feature type="binding site" evidence="1">
    <location>
        <position position="350"/>
    </location>
    <ligand>
        <name>UDP-alpha-D-glucose</name>
        <dbReference type="ChEBI" id="CHEBI:58885"/>
    </ligand>
</feature>
<feature type="binding site" evidence="1">
    <location>
        <position position="352"/>
    </location>
    <ligand>
        <name>UDP-alpha-D-glucose</name>
        <dbReference type="ChEBI" id="CHEBI:58885"/>
    </ligand>
</feature>
<feature type="binding site" evidence="1">
    <location>
        <position position="367"/>
    </location>
    <ligand>
        <name>UDP-alpha-D-glucose</name>
        <dbReference type="ChEBI" id="CHEBI:58885"/>
    </ligand>
</feature>
<feature type="binding site" evidence="1">
    <location>
        <position position="370"/>
    </location>
    <ligand>
        <name>UDP-alpha-D-glucose</name>
        <dbReference type="ChEBI" id="CHEBI:58885"/>
    </ligand>
</feature>
<feature type="binding site" evidence="1">
    <location>
        <position position="371"/>
    </location>
    <ligand>
        <name>UDP-alpha-D-glucose</name>
        <dbReference type="ChEBI" id="CHEBI:58885"/>
    </ligand>
</feature>
<feature type="binding site" evidence="1">
    <location>
        <position position="372"/>
    </location>
    <ligand>
        <name>UDP-alpha-D-glucose</name>
        <dbReference type="ChEBI" id="CHEBI:58885"/>
    </ligand>
</feature>
<feature type="binding site" evidence="1">
    <location>
        <position position="375"/>
    </location>
    <ligand>
        <name>UDP-alpha-D-glucose</name>
        <dbReference type="ChEBI" id="CHEBI:58885"/>
    </ligand>
</feature>
<feature type="binding site" evidence="2">
    <location>
        <position position="390"/>
    </location>
    <ligand>
        <name>an anthocyanidin</name>
        <dbReference type="ChEBI" id="CHEBI:143576"/>
    </ligand>
</feature>
<feature type="binding site" evidence="1">
    <location>
        <position position="391"/>
    </location>
    <ligand>
        <name>UDP-alpha-D-glucose</name>
        <dbReference type="ChEBI" id="CHEBI:58885"/>
    </ligand>
</feature>
<feature type="binding site" evidence="1">
    <location>
        <position position="392"/>
    </location>
    <ligand>
        <name>UDP-alpha-D-glucose</name>
        <dbReference type="ChEBI" id="CHEBI:58885"/>
    </ligand>
</feature>
<accession>Q9LML6</accession>
<accession>Q94BM9</accession>
<proteinExistence type="evidence at protein level"/>
<name>U71C4_ARATH</name>
<sequence length="479" mass="52844">MVKETELIFIPVPSTGHILVHIEFAKRLINLDHRIHTITILNLSSPSSPHASVFARSLIASQPKIRLHDLPPIQDPPPFDLYQRAPEAYIVKLIKKNTPLIKDAVSSIVASRRGGSDSVQVAGLVLDLFCNSLVKDVGNELNLPSYIYLTCNARYLGMMKYIPDRHRKIASEFDLSSGDEELPVPGFINAIPTKFMPPGLFNKEAYEAYVELAPRFADAKGILVNSFTELEPHPFDYFSHLEKFPPVYPVGPILSLKDRASPNEEAVDRDQIVGWLDDQPESSVVFLCFGSRGSVDEPQVKEIARALELVGCRFLWSIRTSGDVETNPNDVLPEGFMGRVAGRGLVCGWAPQVEVLAHKAIGGFVSHCGWNSTLESLWFGVPVATWPMYAEQQLNAFTLVKELGLAVDLRMDYVSSRGGLVTCDEIARAVRSLMDGGDEKRKKVKEMADAARKALMDGGSSSLATARFIAELFEDGSSC</sequence>